<comment type="function">
    <text evidence="2">Catalyzes the attachment of threonine to tRNA(Thr) in a two-step reaction: threonine is first activated by ATP to form Thr-AMP and then transferred to the acceptor end of tRNA(Thr). Also edits incorrectly charged tRNA(Thr) via its editing domain.</text>
</comment>
<comment type="catalytic activity">
    <reaction evidence="2">
        <text>tRNA(Thr) + L-threonine + ATP = L-threonyl-tRNA(Thr) + AMP + diphosphate + H(+)</text>
        <dbReference type="Rhea" id="RHEA:24624"/>
        <dbReference type="Rhea" id="RHEA-COMP:9670"/>
        <dbReference type="Rhea" id="RHEA-COMP:9704"/>
        <dbReference type="ChEBI" id="CHEBI:15378"/>
        <dbReference type="ChEBI" id="CHEBI:30616"/>
        <dbReference type="ChEBI" id="CHEBI:33019"/>
        <dbReference type="ChEBI" id="CHEBI:57926"/>
        <dbReference type="ChEBI" id="CHEBI:78442"/>
        <dbReference type="ChEBI" id="CHEBI:78534"/>
        <dbReference type="ChEBI" id="CHEBI:456215"/>
        <dbReference type="EC" id="6.1.1.3"/>
    </reaction>
</comment>
<comment type="subunit">
    <text evidence="2">Homodimer.</text>
</comment>
<comment type="subcellular location">
    <subcellularLocation>
        <location evidence="1">Mitochondrion matrix</location>
    </subcellularLocation>
</comment>
<comment type="similarity">
    <text evidence="5">Belongs to the class-II aminoacyl-tRNA synthetase family.</text>
</comment>
<name>SYTM_MOUSE</name>
<dbReference type="EC" id="6.1.1.3" evidence="2"/>
<dbReference type="EMBL" id="AK142685">
    <property type="protein sequence ID" value="BAE25159.1"/>
    <property type="molecule type" value="mRNA"/>
</dbReference>
<dbReference type="EMBL" id="AK011540">
    <property type="protein sequence ID" value="BAB27683.1"/>
    <property type="molecule type" value="mRNA"/>
</dbReference>
<dbReference type="EMBL" id="BC147501">
    <property type="protein sequence ID" value="AAI47502.1"/>
    <property type="molecule type" value="mRNA"/>
</dbReference>
<dbReference type="CCDS" id="CCDS38548.1"/>
<dbReference type="RefSeq" id="NP_001157089.1">
    <property type="nucleotide sequence ID" value="NM_001163617.1"/>
</dbReference>
<dbReference type="RefSeq" id="NP_001157090.1">
    <property type="nucleotide sequence ID" value="NM_001163618.1"/>
</dbReference>
<dbReference type="RefSeq" id="NP_082207.2">
    <property type="nucleotide sequence ID" value="NM_027931.3"/>
</dbReference>
<dbReference type="RefSeq" id="XP_030108688.1">
    <property type="nucleotide sequence ID" value="XM_030252828.1"/>
</dbReference>
<dbReference type="SMR" id="Q3UQ84"/>
<dbReference type="BioGRID" id="214943">
    <property type="interactions" value="9"/>
</dbReference>
<dbReference type="FunCoup" id="Q3UQ84">
    <property type="interactions" value="1051"/>
</dbReference>
<dbReference type="STRING" id="10090.ENSMUSP00000029752"/>
<dbReference type="GlyGen" id="Q3UQ84">
    <property type="glycosylation" value="2 sites"/>
</dbReference>
<dbReference type="iPTMnet" id="Q3UQ84"/>
<dbReference type="PhosphoSitePlus" id="Q3UQ84"/>
<dbReference type="SwissPalm" id="Q3UQ84"/>
<dbReference type="PaxDb" id="10090-ENSMUSP00000029752"/>
<dbReference type="PeptideAtlas" id="Q3UQ84"/>
<dbReference type="ProteomicsDB" id="254800"/>
<dbReference type="Pumba" id="Q3UQ84"/>
<dbReference type="Antibodypedia" id="34029">
    <property type="antibodies" value="75 antibodies from 20 providers"/>
</dbReference>
<dbReference type="DNASU" id="71807"/>
<dbReference type="Ensembl" id="ENSMUST00000029752.15">
    <property type="protein sequence ID" value="ENSMUSP00000029752.9"/>
    <property type="gene ID" value="ENSMUSG00000028107.15"/>
</dbReference>
<dbReference type="GeneID" id="71807"/>
<dbReference type="KEGG" id="mmu:71807"/>
<dbReference type="UCSC" id="uc008qkr.2">
    <property type="organism name" value="mouse"/>
</dbReference>
<dbReference type="AGR" id="MGI:1919057"/>
<dbReference type="CTD" id="80222"/>
<dbReference type="MGI" id="MGI:1919057">
    <property type="gene designation" value="Tars2"/>
</dbReference>
<dbReference type="VEuPathDB" id="HostDB:ENSMUSG00000028107"/>
<dbReference type="eggNOG" id="KOG1637">
    <property type="taxonomic scope" value="Eukaryota"/>
</dbReference>
<dbReference type="GeneTree" id="ENSGT00940000161600"/>
<dbReference type="InParanoid" id="Q3UQ84"/>
<dbReference type="OMA" id="PILEQTC"/>
<dbReference type="OrthoDB" id="5423599at2759"/>
<dbReference type="PhylomeDB" id="Q3UQ84"/>
<dbReference type="TreeFam" id="TF300858"/>
<dbReference type="BioGRID-ORCS" id="71807">
    <property type="hits" value="20 hits in 81 CRISPR screens"/>
</dbReference>
<dbReference type="ChiTaRS" id="Tars2">
    <property type="organism name" value="mouse"/>
</dbReference>
<dbReference type="PRO" id="PR:Q3UQ84"/>
<dbReference type="Proteomes" id="UP000000589">
    <property type="component" value="Chromosome 3"/>
</dbReference>
<dbReference type="RNAct" id="Q3UQ84">
    <property type="molecule type" value="protein"/>
</dbReference>
<dbReference type="Bgee" id="ENSMUSG00000028107">
    <property type="expression patterns" value="Expressed in ectoderm and 267 other cell types or tissues"/>
</dbReference>
<dbReference type="ExpressionAtlas" id="Q3UQ84">
    <property type="expression patterns" value="baseline and differential"/>
</dbReference>
<dbReference type="GO" id="GO:0005759">
    <property type="term" value="C:mitochondrial matrix"/>
    <property type="evidence" value="ECO:0007669"/>
    <property type="project" value="UniProtKB-SubCell"/>
</dbReference>
<dbReference type="GO" id="GO:0005739">
    <property type="term" value="C:mitochondrion"/>
    <property type="evidence" value="ECO:0007005"/>
    <property type="project" value="MGI"/>
</dbReference>
<dbReference type="GO" id="GO:0002161">
    <property type="term" value="F:aminoacyl-tRNA deacylase activity"/>
    <property type="evidence" value="ECO:0000250"/>
    <property type="project" value="UniProtKB"/>
</dbReference>
<dbReference type="GO" id="GO:0005524">
    <property type="term" value="F:ATP binding"/>
    <property type="evidence" value="ECO:0007669"/>
    <property type="project" value="UniProtKB-KW"/>
</dbReference>
<dbReference type="GO" id="GO:0042803">
    <property type="term" value="F:protein homodimerization activity"/>
    <property type="evidence" value="ECO:0000250"/>
    <property type="project" value="UniProtKB"/>
</dbReference>
<dbReference type="GO" id="GO:0004829">
    <property type="term" value="F:threonine-tRNA ligase activity"/>
    <property type="evidence" value="ECO:0000250"/>
    <property type="project" value="UniProtKB"/>
</dbReference>
<dbReference type="GO" id="GO:0006435">
    <property type="term" value="P:threonyl-tRNA aminoacylation"/>
    <property type="evidence" value="ECO:0007669"/>
    <property type="project" value="InterPro"/>
</dbReference>
<dbReference type="CDD" id="cd01667">
    <property type="entry name" value="TGS_ThrRS"/>
    <property type="match status" value="1"/>
</dbReference>
<dbReference type="CDD" id="cd00860">
    <property type="entry name" value="ThrRS_anticodon"/>
    <property type="match status" value="1"/>
</dbReference>
<dbReference type="CDD" id="cd00771">
    <property type="entry name" value="ThrRS_core"/>
    <property type="match status" value="1"/>
</dbReference>
<dbReference type="FunFam" id="3.40.50.800:FF:000003">
    <property type="entry name" value="Threonine--tRNA ligase 2, cytoplasmic"/>
    <property type="match status" value="1"/>
</dbReference>
<dbReference type="FunFam" id="3.10.20.30:FF:000006">
    <property type="entry name" value="Threonine--tRNA ligase, cytoplasmic"/>
    <property type="match status" value="1"/>
</dbReference>
<dbReference type="FunFam" id="3.30.930.10:FF:000039">
    <property type="entry name" value="Threonyl-tRNA synthetase, mitochondrial"/>
    <property type="match status" value="1"/>
</dbReference>
<dbReference type="FunFam" id="3.30.980.10:FF:000005">
    <property type="entry name" value="Threonyl-tRNA synthetase, mitochondrial"/>
    <property type="match status" value="1"/>
</dbReference>
<dbReference type="Gene3D" id="3.10.20.30">
    <property type="match status" value="1"/>
</dbReference>
<dbReference type="Gene3D" id="3.40.50.800">
    <property type="entry name" value="Anticodon-binding domain"/>
    <property type="match status" value="1"/>
</dbReference>
<dbReference type="Gene3D" id="3.30.930.10">
    <property type="entry name" value="Bira Bifunctional Protein, Domain 2"/>
    <property type="match status" value="1"/>
</dbReference>
<dbReference type="Gene3D" id="3.30.980.10">
    <property type="entry name" value="Threonyl-trna Synthetase, Chain A, domain 2"/>
    <property type="match status" value="1"/>
</dbReference>
<dbReference type="HAMAP" id="MF_00184">
    <property type="entry name" value="Thr_tRNA_synth"/>
    <property type="match status" value="1"/>
</dbReference>
<dbReference type="InterPro" id="IPR002314">
    <property type="entry name" value="aa-tRNA-synt_IIb"/>
</dbReference>
<dbReference type="InterPro" id="IPR006195">
    <property type="entry name" value="aa-tRNA-synth_II"/>
</dbReference>
<dbReference type="InterPro" id="IPR045864">
    <property type="entry name" value="aa-tRNA-synth_II/BPL/LPL"/>
</dbReference>
<dbReference type="InterPro" id="IPR004154">
    <property type="entry name" value="Anticodon-bd"/>
</dbReference>
<dbReference type="InterPro" id="IPR036621">
    <property type="entry name" value="Anticodon-bd_dom_sf"/>
</dbReference>
<dbReference type="InterPro" id="IPR012675">
    <property type="entry name" value="Beta-grasp_dom_sf"/>
</dbReference>
<dbReference type="InterPro" id="IPR004095">
    <property type="entry name" value="TGS"/>
</dbReference>
<dbReference type="InterPro" id="IPR012676">
    <property type="entry name" value="TGS-like"/>
</dbReference>
<dbReference type="InterPro" id="IPR002320">
    <property type="entry name" value="Thr-tRNA-ligase_IIa"/>
</dbReference>
<dbReference type="InterPro" id="IPR018163">
    <property type="entry name" value="Thr/Ala-tRNA-synth_IIc_edit"/>
</dbReference>
<dbReference type="InterPro" id="IPR047246">
    <property type="entry name" value="ThrRS_anticodon"/>
</dbReference>
<dbReference type="InterPro" id="IPR033728">
    <property type="entry name" value="ThrRS_core"/>
</dbReference>
<dbReference type="InterPro" id="IPR012947">
    <property type="entry name" value="tRNA_SAD"/>
</dbReference>
<dbReference type="NCBIfam" id="TIGR00418">
    <property type="entry name" value="thrS"/>
    <property type="match status" value="1"/>
</dbReference>
<dbReference type="PANTHER" id="PTHR11451:SF27">
    <property type="entry name" value="THREONINE--TRNA LIGASE, MITOCHONDRIAL"/>
    <property type="match status" value="1"/>
</dbReference>
<dbReference type="PANTHER" id="PTHR11451">
    <property type="entry name" value="THREONINE-TRNA LIGASE"/>
    <property type="match status" value="1"/>
</dbReference>
<dbReference type="Pfam" id="PF03129">
    <property type="entry name" value="HGTP_anticodon"/>
    <property type="match status" value="1"/>
</dbReference>
<dbReference type="Pfam" id="PF02824">
    <property type="entry name" value="TGS"/>
    <property type="match status" value="1"/>
</dbReference>
<dbReference type="Pfam" id="PF00587">
    <property type="entry name" value="tRNA-synt_2b"/>
    <property type="match status" value="1"/>
</dbReference>
<dbReference type="Pfam" id="PF07973">
    <property type="entry name" value="tRNA_SAD"/>
    <property type="match status" value="1"/>
</dbReference>
<dbReference type="PRINTS" id="PR01047">
    <property type="entry name" value="TRNASYNTHTHR"/>
</dbReference>
<dbReference type="SMART" id="SM00863">
    <property type="entry name" value="tRNA_SAD"/>
    <property type="match status" value="1"/>
</dbReference>
<dbReference type="SUPFAM" id="SSF52954">
    <property type="entry name" value="Class II aaRS ABD-related"/>
    <property type="match status" value="1"/>
</dbReference>
<dbReference type="SUPFAM" id="SSF55681">
    <property type="entry name" value="Class II aaRS and biotin synthetases"/>
    <property type="match status" value="1"/>
</dbReference>
<dbReference type="SUPFAM" id="SSF81271">
    <property type="entry name" value="TGS-like"/>
    <property type="match status" value="1"/>
</dbReference>
<dbReference type="SUPFAM" id="SSF55186">
    <property type="entry name" value="ThrRS/AlaRS common domain"/>
    <property type="match status" value="1"/>
</dbReference>
<dbReference type="PROSITE" id="PS50862">
    <property type="entry name" value="AA_TRNA_LIGASE_II"/>
    <property type="match status" value="1"/>
</dbReference>
<dbReference type="PROSITE" id="PS51880">
    <property type="entry name" value="TGS"/>
    <property type="match status" value="1"/>
</dbReference>
<gene>
    <name type="primary">Tars2</name>
    <name type="synonym">Tarsl1</name>
</gene>
<keyword id="KW-0030">Aminoacyl-tRNA synthetase</keyword>
<keyword id="KW-0067">ATP-binding</keyword>
<keyword id="KW-0436">Ligase</keyword>
<keyword id="KW-0496">Mitochondrion</keyword>
<keyword id="KW-0547">Nucleotide-binding</keyword>
<keyword id="KW-0597">Phosphoprotein</keyword>
<keyword id="KW-0648">Protein biosynthesis</keyword>
<keyword id="KW-1185">Reference proteome</keyword>
<keyword id="KW-0809">Transit peptide</keyword>
<protein>
    <recommendedName>
        <fullName>Threonine--tRNA ligase, mitochondrial</fullName>
        <ecNumber evidence="2">6.1.1.3</ecNumber>
    </recommendedName>
    <alternativeName>
        <fullName>Threonyl-tRNA synthetase</fullName>
        <shortName>ThrRS</shortName>
    </alternativeName>
    <alternativeName>
        <fullName>Threonyl-tRNA synthetase-like 1</fullName>
    </alternativeName>
</protein>
<accession>Q3UQ84</accession>
<accession>B2RW19</accession>
<accession>Q9D0D6</accession>
<feature type="transit peptide" description="Mitochondrion" evidence="3">
    <location>
        <begin position="1"/>
        <end status="unknown"/>
    </location>
</feature>
<feature type="chain" id="PRO_0000254587" description="Threonine--tRNA ligase, mitochondrial">
    <location>
        <begin status="unknown"/>
        <end position="723"/>
    </location>
</feature>
<feature type="domain" description="TGS" evidence="4">
    <location>
        <begin position="64"/>
        <end position="126"/>
    </location>
</feature>
<feature type="modified residue" description="Phosphoserine" evidence="2">
    <location>
        <position position="57"/>
    </location>
</feature>
<feature type="sequence conflict" description="In Ref. 1; BAB27683." evidence="5" ref="1">
    <original>R</original>
    <variation>G</variation>
    <location>
        <position position="9"/>
    </location>
</feature>
<reference key="1">
    <citation type="journal article" date="2005" name="Science">
        <title>The transcriptional landscape of the mammalian genome.</title>
        <authorList>
            <person name="Carninci P."/>
            <person name="Kasukawa T."/>
            <person name="Katayama S."/>
            <person name="Gough J."/>
            <person name="Frith M.C."/>
            <person name="Maeda N."/>
            <person name="Oyama R."/>
            <person name="Ravasi T."/>
            <person name="Lenhard B."/>
            <person name="Wells C."/>
            <person name="Kodzius R."/>
            <person name="Shimokawa K."/>
            <person name="Bajic V.B."/>
            <person name="Brenner S.E."/>
            <person name="Batalov S."/>
            <person name="Forrest A.R."/>
            <person name="Zavolan M."/>
            <person name="Davis M.J."/>
            <person name="Wilming L.G."/>
            <person name="Aidinis V."/>
            <person name="Allen J.E."/>
            <person name="Ambesi-Impiombato A."/>
            <person name="Apweiler R."/>
            <person name="Aturaliya R.N."/>
            <person name="Bailey T.L."/>
            <person name="Bansal M."/>
            <person name="Baxter L."/>
            <person name="Beisel K.W."/>
            <person name="Bersano T."/>
            <person name="Bono H."/>
            <person name="Chalk A.M."/>
            <person name="Chiu K.P."/>
            <person name="Choudhary V."/>
            <person name="Christoffels A."/>
            <person name="Clutterbuck D.R."/>
            <person name="Crowe M.L."/>
            <person name="Dalla E."/>
            <person name="Dalrymple B.P."/>
            <person name="de Bono B."/>
            <person name="Della Gatta G."/>
            <person name="di Bernardo D."/>
            <person name="Down T."/>
            <person name="Engstrom P."/>
            <person name="Fagiolini M."/>
            <person name="Faulkner G."/>
            <person name="Fletcher C.F."/>
            <person name="Fukushima T."/>
            <person name="Furuno M."/>
            <person name="Futaki S."/>
            <person name="Gariboldi M."/>
            <person name="Georgii-Hemming P."/>
            <person name="Gingeras T.R."/>
            <person name="Gojobori T."/>
            <person name="Green R.E."/>
            <person name="Gustincich S."/>
            <person name="Harbers M."/>
            <person name="Hayashi Y."/>
            <person name="Hensch T.K."/>
            <person name="Hirokawa N."/>
            <person name="Hill D."/>
            <person name="Huminiecki L."/>
            <person name="Iacono M."/>
            <person name="Ikeo K."/>
            <person name="Iwama A."/>
            <person name="Ishikawa T."/>
            <person name="Jakt M."/>
            <person name="Kanapin A."/>
            <person name="Katoh M."/>
            <person name="Kawasawa Y."/>
            <person name="Kelso J."/>
            <person name="Kitamura H."/>
            <person name="Kitano H."/>
            <person name="Kollias G."/>
            <person name="Krishnan S.P."/>
            <person name="Kruger A."/>
            <person name="Kummerfeld S.K."/>
            <person name="Kurochkin I.V."/>
            <person name="Lareau L.F."/>
            <person name="Lazarevic D."/>
            <person name="Lipovich L."/>
            <person name="Liu J."/>
            <person name="Liuni S."/>
            <person name="McWilliam S."/>
            <person name="Madan Babu M."/>
            <person name="Madera M."/>
            <person name="Marchionni L."/>
            <person name="Matsuda H."/>
            <person name="Matsuzawa S."/>
            <person name="Miki H."/>
            <person name="Mignone F."/>
            <person name="Miyake S."/>
            <person name="Morris K."/>
            <person name="Mottagui-Tabar S."/>
            <person name="Mulder N."/>
            <person name="Nakano N."/>
            <person name="Nakauchi H."/>
            <person name="Ng P."/>
            <person name="Nilsson R."/>
            <person name="Nishiguchi S."/>
            <person name="Nishikawa S."/>
            <person name="Nori F."/>
            <person name="Ohara O."/>
            <person name="Okazaki Y."/>
            <person name="Orlando V."/>
            <person name="Pang K.C."/>
            <person name="Pavan W.J."/>
            <person name="Pavesi G."/>
            <person name="Pesole G."/>
            <person name="Petrovsky N."/>
            <person name="Piazza S."/>
            <person name="Reed J."/>
            <person name="Reid J.F."/>
            <person name="Ring B.Z."/>
            <person name="Ringwald M."/>
            <person name="Rost B."/>
            <person name="Ruan Y."/>
            <person name="Salzberg S.L."/>
            <person name="Sandelin A."/>
            <person name="Schneider C."/>
            <person name="Schoenbach C."/>
            <person name="Sekiguchi K."/>
            <person name="Semple C.A."/>
            <person name="Seno S."/>
            <person name="Sessa L."/>
            <person name="Sheng Y."/>
            <person name="Shibata Y."/>
            <person name="Shimada H."/>
            <person name="Shimada K."/>
            <person name="Silva D."/>
            <person name="Sinclair B."/>
            <person name="Sperling S."/>
            <person name="Stupka E."/>
            <person name="Sugiura K."/>
            <person name="Sultana R."/>
            <person name="Takenaka Y."/>
            <person name="Taki K."/>
            <person name="Tammoja K."/>
            <person name="Tan S.L."/>
            <person name="Tang S."/>
            <person name="Taylor M.S."/>
            <person name="Tegner J."/>
            <person name="Teichmann S.A."/>
            <person name="Ueda H.R."/>
            <person name="van Nimwegen E."/>
            <person name="Verardo R."/>
            <person name="Wei C.L."/>
            <person name="Yagi K."/>
            <person name="Yamanishi H."/>
            <person name="Zabarovsky E."/>
            <person name="Zhu S."/>
            <person name="Zimmer A."/>
            <person name="Hide W."/>
            <person name="Bult C."/>
            <person name="Grimmond S.M."/>
            <person name="Teasdale R.D."/>
            <person name="Liu E.T."/>
            <person name="Brusic V."/>
            <person name="Quackenbush J."/>
            <person name="Wahlestedt C."/>
            <person name="Mattick J.S."/>
            <person name="Hume D.A."/>
            <person name="Kai C."/>
            <person name="Sasaki D."/>
            <person name="Tomaru Y."/>
            <person name="Fukuda S."/>
            <person name="Kanamori-Katayama M."/>
            <person name="Suzuki M."/>
            <person name="Aoki J."/>
            <person name="Arakawa T."/>
            <person name="Iida J."/>
            <person name="Imamura K."/>
            <person name="Itoh M."/>
            <person name="Kato T."/>
            <person name="Kawaji H."/>
            <person name="Kawagashira N."/>
            <person name="Kawashima T."/>
            <person name="Kojima M."/>
            <person name="Kondo S."/>
            <person name="Konno H."/>
            <person name="Nakano K."/>
            <person name="Ninomiya N."/>
            <person name="Nishio T."/>
            <person name="Okada M."/>
            <person name="Plessy C."/>
            <person name="Shibata K."/>
            <person name="Shiraki T."/>
            <person name="Suzuki S."/>
            <person name="Tagami M."/>
            <person name="Waki K."/>
            <person name="Watahiki A."/>
            <person name="Okamura-Oho Y."/>
            <person name="Suzuki H."/>
            <person name="Kawai J."/>
            <person name="Hayashizaki Y."/>
        </authorList>
    </citation>
    <scope>NUCLEOTIDE SEQUENCE [LARGE SCALE MRNA]</scope>
    <source>
        <strain>C57BL/6J</strain>
        <tissue>Mammary gland</tissue>
    </source>
</reference>
<reference key="2">
    <citation type="journal article" date="2004" name="Genome Res.">
        <title>The status, quality, and expansion of the NIH full-length cDNA project: the Mammalian Gene Collection (MGC).</title>
        <authorList>
            <consortium name="The MGC Project Team"/>
        </authorList>
    </citation>
    <scope>NUCLEOTIDE SEQUENCE [LARGE SCALE MRNA]</scope>
    <source>
        <tissue>Brain</tissue>
    </source>
</reference>
<reference key="3">
    <citation type="journal article" date="2010" name="Cell">
        <title>A tissue-specific atlas of mouse protein phosphorylation and expression.</title>
        <authorList>
            <person name="Huttlin E.L."/>
            <person name="Jedrychowski M.P."/>
            <person name="Elias J.E."/>
            <person name="Goswami T."/>
            <person name="Rad R."/>
            <person name="Beausoleil S.A."/>
            <person name="Villen J."/>
            <person name="Haas W."/>
            <person name="Sowa M.E."/>
            <person name="Gygi S.P."/>
        </authorList>
    </citation>
    <scope>IDENTIFICATION BY MASS SPECTROMETRY [LARGE SCALE ANALYSIS]</scope>
    <source>
        <tissue>Brain</tissue>
        <tissue>Brown adipose tissue</tissue>
        <tissue>Heart</tissue>
        <tissue>Kidney</tissue>
        <tissue>Liver</tissue>
        <tissue>Spleen</tissue>
        <tissue>Testis</tissue>
    </source>
</reference>
<evidence type="ECO:0000250" key="1"/>
<evidence type="ECO:0000250" key="2">
    <source>
        <dbReference type="UniProtKB" id="Q9BW92"/>
    </source>
</evidence>
<evidence type="ECO:0000255" key="3"/>
<evidence type="ECO:0000255" key="4">
    <source>
        <dbReference type="PROSITE-ProRule" id="PRU01228"/>
    </source>
</evidence>
<evidence type="ECO:0000305" key="5"/>
<organism>
    <name type="scientific">Mus musculus</name>
    <name type="common">Mouse</name>
    <dbReference type="NCBI Taxonomy" id="10090"/>
    <lineage>
        <taxon>Eukaryota</taxon>
        <taxon>Metazoa</taxon>
        <taxon>Chordata</taxon>
        <taxon>Craniata</taxon>
        <taxon>Vertebrata</taxon>
        <taxon>Euteleostomi</taxon>
        <taxon>Mammalia</taxon>
        <taxon>Eutheria</taxon>
        <taxon>Euarchontoglires</taxon>
        <taxon>Glires</taxon>
        <taxon>Rodentia</taxon>
        <taxon>Myomorpha</taxon>
        <taxon>Muroidea</taxon>
        <taxon>Muridae</taxon>
        <taxon>Murinae</taxon>
        <taxon>Mus</taxon>
        <taxon>Mus</taxon>
    </lineage>
</organism>
<proteinExistence type="evidence at protein level"/>
<sequence>MGLCLRWRRLGFPLPEFRRCELHTVREASAPTPPHWLAERFGLFEELWTAHVKKLASMTQKKARAIKISLPEGQKVDAVAWNTTPYQLAHQISVTLADTAVAAEVNGELYDLDRPLETDCHLRFLTFDSPEGKAVFWHSSAHVLGAAAEQQLGAVLCRGPSTESGFYHDFFLGKERTVRSAELPILERICQELIAAAQPFRRLEASRDQLRQLFKDNHFKLHLIEEKVTGPTATVYGCGMSVDLCRGPHLRHTGQIGALKLLTNSSALWRSLGAPETLQRVSGISFPKVELLRNWEARREAAELRDHRRIGKEQELFFFHELSPGSCFFLPRGTRVYNALVAFIRAEYARRGFSEVKTPTLFSTKLWEQSGHWEHYRADMFSLKPPGTDGVDNSQSGHPARCPKDTLALKPMNCPAHCLMFAHRPRSWRELPVRLADFGALHRAEASGSLGGLTRLWRFQQDDAHIFCAPHQLEAEIQGCLDFLRCVYSVLGFSFHLALSTRPPGFLGEPRLWDQAEQVLQQALEKFGEPWDLNPGDGAFYGPKIDVHLHDALGRPHQCGTIQLDFQLPLRFDLQYKGPAGTPECPVLIHRAVLGSVERLLGVLAESCGGKWPLWLSPLQVVVIPVRTEQEEYARQVQQCLQAAGLVSDLDADSGLTLSRRVRRAQLAHYNFQFVVGQREQSQRTVNVRTRDNRQLGERDLAESVQRLLELQNARVPNAEEVF</sequence>